<comment type="function">
    <text evidence="1">Catalyzes the anti-1,4-elimination of the C-3 phosphate and the C-6 proR hydrogen from 5-enolpyruvylshikimate-3-phosphate (EPSP) to yield chorismate, which is the branch point compound that serves as the starting substrate for the three terminal pathways of aromatic amino acid biosynthesis. This reaction introduces a second double bond into the aromatic ring system.</text>
</comment>
<comment type="catalytic activity">
    <reaction evidence="1">
        <text>5-O-(1-carboxyvinyl)-3-phosphoshikimate = chorismate + phosphate</text>
        <dbReference type="Rhea" id="RHEA:21020"/>
        <dbReference type="ChEBI" id="CHEBI:29748"/>
        <dbReference type="ChEBI" id="CHEBI:43474"/>
        <dbReference type="ChEBI" id="CHEBI:57701"/>
        <dbReference type="EC" id="4.2.3.5"/>
    </reaction>
</comment>
<comment type="cofactor">
    <cofactor evidence="1">
        <name>FMNH2</name>
        <dbReference type="ChEBI" id="CHEBI:57618"/>
    </cofactor>
    <text evidence="1">Reduced FMN (FMNH(2)).</text>
</comment>
<comment type="pathway">
    <text evidence="1">Metabolic intermediate biosynthesis; chorismate biosynthesis; chorismate from D-erythrose 4-phosphate and phosphoenolpyruvate: step 7/7.</text>
</comment>
<comment type="subunit">
    <text evidence="1">Homotetramer.</text>
</comment>
<comment type="similarity">
    <text evidence="1">Belongs to the chorismate synthase family.</text>
</comment>
<protein>
    <recommendedName>
        <fullName evidence="1">Chorismate synthase</fullName>
        <shortName evidence="1">CS</shortName>
        <ecNumber evidence="1">4.2.3.5</ecNumber>
    </recommendedName>
    <alternativeName>
        <fullName evidence="1">5-enolpyruvylshikimate-3-phosphate phospholyase</fullName>
    </alternativeName>
</protein>
<accession>B8F415</accession>
<proteinExistence type="inferred from homology"/>
<evidence type="ECO:0000255" key="1">
    <source>
        <dbReference type="HAMAP-Rule" id="MF_00300"/>
    </source>
</evidence>
<dbReference type="EC" id="4.2.3.5" evidence="1"/>
<dbReference type="EMBL" id="CP001321">
    <property type="protein sequence ID" value="ACL32067.1"/>
    <property type="molecule type" value="Genomic_DNA"/>
</dbReference>
<dbReference type="RefSeq" id="WP_005712594.1">
    <property type="nucleotide sequence ID" value="NC_011852.1"/>
</dbReference>
<dbReference type="SMR" id="B8F415"/>
<dbReference type="STRING" id="557723.HAPS_0387"/>
<dbReference type="GeneID" id="66618821"/>
<dbReference type="KEGG" id="hap:HAPS_0387"/>
<dbReference type="HOGENOM" id="CLU_034547_0_2_6"/>
<dbReference type="UniPathway" id="UPA00053">
    <property type="reaction ID" value="UER00090"/>
</dbReference>
<dbReference type="Proteomes" id="UP000006743">
    <property type="component" value="Chromosome"/>
</dbReference>
<dbReference type="GO" id="GO:0005829">
    <property type="term" value="C:cytosol"/>
    <property type="evidence" value="ECO:0007669"/>
    <property type="project" value="TreeGrafter"/>
</dbReference>
<dbReference type="GO" id="GO:0004107">
    <property type="term" value="F:chorismate synthase activity"/>
    <property type="evidence" value="ECO:0007669"/>
    <property type="project" value="UniProtKB-UniRule"/>
</dbReference>
<dbReference type="GO" id="GO:0010181">
    <property type="term" value="F:FMN binding"/>
    <property type="evidence" value="ECO:0007669"/>
    <property type="project" value="TreeGrafter"/>
</dbReference>
<dbReference type="GO" id="GO:0008652">
    <property type="term" value="P:amino acid biosynthetic process"/>
    <property type="evidence" value="ECO:0007669"/>
    <property type="project" value="UniProtKB-KW"/>
</dbReference>
<dbReference type="GO" id="GO:0009073">
    <property type="term" value="P:aromatic amino acid family biosynthetic process"/>
    <property type="evidence" value="ECO:0007669"/>
    <property type="project" value="UniProtKB-KW"/>
</dbReference>
<dbReference type="GO" id="GO:0009423">
    <property type="term" value="P:chorismate biosynthetic process"/>
    <property type="evidence" value="ECO:0007669"/>
    <property type="project" value="UniProtKB-UniRule"/>
</dbReference>
<dbReference type="CDD" id="cd07304">
    <property type="entry name" value="Chorismate_synthase"/>
    <property type="match status" value="1"/>
</dbReference>
<dbReference type="FunFam" id="3.60.150.10:FF:000001">
    <property type="entry name" value="Chorismate synthase"/>
    <property type="match status" value="1"/>
</dbReference>
<dbReference type="Gene3D" id="3.60.150.10">
    <property type="entry name" value="Chorismate synthase AroC"/>
    <property type="match status" value="1"/>
</dbReference>
<dbReference type="HAMAP" id="MF_00300">
    <property type="entry name" value="Chorismate_synth"/>
    <property type="match status" value="1"/>
</dbReference>
<dbReference type="InterPro" id="IPR000453">
    <property type="entry name" value="Chorismate_synth"/>
</dbReference>
<dbReference type="InterPro" id="IPR035904">
    <property type="entry name" value="Chorismate_synth_AroC_sf"/>
</dbReference>
<dbReference type="InterPro" id="IPR020541">
    <property type="entry name" value="Chorismate_synthase_CS"/>
</dbReference>
<dbReference type="NCBIfam" id="TIGR00033">
    <property type="entry name" value="aroC"/>
    <property type="match status" value="1"/>
</dbReference>
<dbReference type="NCBIfam" id="NF003793">
    <property type="entry name" value="PRK05382.1"/>
    <property type="match status" value="1"/>
</dbReference>
<dbReference type="PANTHER" id="PTHR21085">
    <property type="entry name" value="CHORISMATE SYNTHASE"/>
    <property type="match status" value="1"/>
</dbReference>
<dbReference type="PANTHER" id="PTHR21085:SF0">
    <property type="entry name" value="CHORISMATE SYNTHASE"/>
    <property type="match status" value="1"/>
</dbReference>
<dbReference type="Pfam" id="PF01264">
    <property type="entry name" value="Chorismate_synt"/>
    <property type="match status" value="1"/>
</dbReference>
<dbReference type="PIRSF" id="PIRSF001456">
    <property type="entry name" value="Chorismate_synth"/>
    <property type="match status" value="1"/>
</dbReference>
<dbReference type="SUPFAM" id="SSF103263">
    <property type="entry name" value="Chorismate synthase, AroC"/>
    <property type="match status" value="1"/>
</dbReference>
<dbReference type="PROSITE" id="PS00787">
    <property type="entry name" value="CHORISMATE_SYNTHASE_1"/>
    <property type="match status" value="1"/>
</dbReference>
<dbReference type="PROSITE" id="PS00788">
    <property type="entry name" value="CHORISMATE_SYNTHASE_2"/>
    <property type="match status" value="1"/>
</dbReference>
<dbReference type="PROSITE" id="PS00789">
    <property type="entry name" value="CHORISMATE_SYNTHASE_3"/>
    <property type="match status" value="1"/>
</dbReference>
<sequence>MAGNSIGQLFKVTTFGESHGIALGCIVDGVPPNMELSEADLQPDLDRRKPGTSRYTTPRREDDEVQILSGVFEGKTTGTSIGLIIKNGDQRSKDYGDIMDKFRPGHADYTYQQKYGIRDYRGGGRSSARETAMRVAAGAIAKKYLKEQFGVEIRGYLSQIGSVKIDPQTVANIEQIDWQQVNSNPFFCPDPVAVEQFDELIRELKKEGNSIGAKLTVIAENVPVGLGEPVFDRLDADLAHALMSINAVKGVEIGDGFAAVEQKGSEHRDEMTPEGFCSNHSGGILGGISSGQPIIAHIALKPTSSITVPGKSVNVHNEPVEVVTKGRHDPCVGIRAVPIAEAMMAIVVLDHLLRFKAQCR</sequence>
<keyword id="KW-0028">Amino-acid biosynthesis</keyword>
<keyword id="KW-0057">Aromatic amino acid biosynthesis</keyword>
<keyword id="KW-0274">FAD</keyword>
<keyword id="KW-0285">Flavoprotein</keyword>
<keyword id="KW-0288">FMN</keyword>
<keyword id="KW-0456">Lyase</keyword>
<keyword id="KW-0521">NADP</keyword>
<keyword id="KW-1185">Reference proteome</keyword>
<name>AROC_GLAP5</name>
<organism>
    <name type="scientific">Glaesserella parasuis serovar 5 (strain SH0165)</name>
    <name type="common">Haemophilus parasuis</name>
    <dbReference type="NCBI Taxonomy" id="557723"/>
    <lineage>
        <taxon>Bacteria</taxon>
        <taxon>Pseudomonadati</taxon>
        <taxon>Pseudomonadota</taxon>
        <taxon>Gammaproteobacteria</taxon>
        <taxon>Pasteurellales</taxon>
        <taxon>Pasteurellaceae</taxon>
        <taxon>Glaesserella</taxon>
    </lineage>
</organism>
<reference key="1">
    <citation type="journal article" date="2009" name="J. Bacteriol.">
        <title>Complete genome sequence of Haemophilus parasuis SH0165.</title>
        <authorList>
            <person name="Yue M."/>
            <person name="Yang F."/>
            <person name="Yang J."/>
            <person name="Bei W."/>
            <person name="Cai X."/>
            <person name="Chen L."/>
            <person name="Dong J."/>
            <person name="Zhou R."/>
            <person name="Jin M."/>
            <person name="Jin Q."/>
            <person name="Chen H."/>
        </authorList>
    </citation>
    <scope>NUCLEOTIDE SEQUENCE [LARGE SCALE GENOMIC DNA]</scope>
    <source>
        <strain>SH0165</strain>
    </source>
</reference>
<gene>
    <name evidence="1" type="primary">aroC</name>
    <name type="ordered locus">HAPS_0387</name>
</gene>
<feature type="chain" id="PRO_1000132774" description="Chorismate synthase">
    <location>
        <begin position="1"/>
        <end position="360"/>
    </location>
</feature>
<feature type="binding site" evidence="1">
    <location>
        <position position="48"/>
    </location>
    <ligand>
        <name>NADP(+)</name>
        <dbReference type="ChEBI" id="CHEBI:58349"/>
    </ligand>
</feature>
<feature type="binding site" evidence="1">
    <location>
        <position position="54"/>
    </location>
    <ligand>
        <name>NADP(+)</name>
        <dbReference type="ChEBI" id="CHEBI:58349"/>
    </ligand>
</feature>
<feature type="binding site" evidence="1">
    <location>
        <begin position="125"/>
        <end position="127"/>
    </location>
    <ligand>
        <name>FMN</name>
        <dbReference type="ChEBI" id="CHEBI:58210"/>
    </ligand>
</feature>
<feature type="binding site" evidence="1">
    <location>
        <begin position="246"/>
        <end position="247"/>
    </location>
    <ligand>
        <name>FMN</name>
        <dbReference type="ChEBI" id="CHEBI:58210"/>
    </ligand>
</feature>
<feature type="binding site" evidence="1">
    <location>
        <position position="286"/>
    </location>
    <ligand>
        <name>FMN</name>
        <dbReference type="ChEBI" id="CHEBI:58210"/>
    </ligand>
</feature>
<feature type="binding site" evidence="1">
    <location>
        <begin position="301"/>
        <end position="305"/>
    </location>
    <ligand>
        <name>FMN</name>
        <dbReference type="ChEBI" id="CHEBI:58210"/>
    </ligand>
</feature>
<feature type="binding site" evidence="1">
    <location>
        <position position="327"/>
    </location>
    <ligand>
        <name>FMN</name>
        <dbReference type="ChEBI" id="CHEBI:58210"/>
    </ligand>
</feature>